<feature type="initiator methionine" description="Removed" evidence="1">
    <location>
        <position position="1"/>
    </location>
</feature>
<feature type="chain" id="PRO_0000071866" description="Histone H2B">
    <location>
        <begin position="2"/>
        <end position="123"/>
    </location>
</feature>
<feature type="region of interest" description="Disordered" evidence="3">
    <location>
        <begin position="1"/>
        <end position="30"/>
    </location>
</feature>
<feature type="modified residue" description="N-methylproline; partial" evidence="2">
    <location>
        <position position="2"/>
    </location>
</feature>
<feature type="modified residue" description="N6-succinyllysine" evidence="2">
    <location>
        <position position="44"/>
    </location>
</feature>
<feature type="modified residue" description="N6-succinyllysine" evidence="2">
    <location>
        <position position="114"/>
    </location>
</feature>
<feature type="modified residue" description="N6-succinyllysine" evidence="2">
    <location>
        <position position="118"/>
    </location>
</feature>
<feature type="glycosylation site" description="O-linked (GlcNAc) serine" evidence="1">
    <location>
        <position position="110"/>
    </location>
</feature>
<feature type="cross-link" description="Glycyl lysine isopeptide (Lys-Gly) (interchain with G-Cter in ubiquitin)" evidence="2">
    <location>
        <position position="118"/>
    </location>
</feature>
<dbReference type="EMBL" id="AB073635">
    <property type="protein sequence ID" value="BAC54557.1"/>
    <property type="molecule type" value="Genomic_DNA"/>
</dbReference>
<dbReference type="SMR" id="Q8I1N0"/>
<dbReference type="GlyCosmos" id="Q8I1N0">
    <property type="glycosylation" value="1 site, No reported glycans"/>
</dbReference>
<dbReference type="eggNOG" id="KOG1744">
    <property type="taxonomic scope" value="Eukaryota"/>
</dbReference>
<dbReference type="OrthoDB" id="7633403at2759"/>
<dbReference type="GO" id="GO:0000786">
    <property type="term" value="C:nucleosome"/>
    <property type="evidence" value="ECO:0007669"/>
    <property type="project" value="UniProtKB-KW"/>
</dbReference>
<dbReference type="GO" id="GO:0005634">
    <property type="term" value="C:nucleus"/>
    <property type="evidence" value="ECO:0007669"/>
    <property type="project" value="UniProtKB-SubCell"/>
</dbReference>
<dbReference type="GO" id="GO:0003677">
    <property type="term" value="F:DNA binding"/>
    <property type="evidence" value="ECO:0007669"/>
    <property type="project" value="UniProtKB-KW"/>
</dbReference>
<dbReference type="GO" id="GO:0046982">
    <property type="term" value="F:protein heterodimerization activity"/>
    <property type="evidence" value="ECO:0007669"/>
    <property type="project" value="InterPro"/>
</dbReference>
<dbReference type="GO" id="GO:0044877">
    <property type="term" value="F:protein-containing complex binding"/>
    <property type="evidence" value="ECO:0000250"/>
    <property type="project" value="UniProtKB"/>
</dbReference>
<dbReference type="GO" id="GO:0030527">
    <property type="term" value="F:structural constituent of chromatin"/>
    <property type="evidence" value="ECO:0007669"/>
    <property type="project" value="InterPro"/>
</dbReference>
<dbReference type="CDD" id="cd22910">
    <property type="entry name" value="HFD_H2B"/>
    <property type="match status" value="1"/>
</dbReference>
<dbReference type="FunFam" id="1.10.20.10:FF:000016">
    <property type="entry name" value="Histone H2B"/>
    <property type="match status" value="1"/>
</dbReference>
<dbReference type="Gene3D" id="1.10.20.10">
    <property type="entry name" value="Histone, subunit A"/>
    <property type="match status" value="1"/>
</dbReference>
<dbReference type="InterPro" id="IPR009072">
    <property type="entry name" value="Histone-fold"/>
</dbReference>
<dbReference type="InterPro" id="IPR007125">
    <property type="entry name" value="Histone_H2A/H2B/H3"/>
</dbReference>
<dbReference type="InterPro" id="IPR000558">
    <property type="entry name" value="Histone_H2B"/>
</dbReference>
<dbReference type="InterPro" id="IPR055333">
    <property type="entry name" value="HISTONE_H2B_site"/>
</dbReference>
<dbReference type="PANTHER" id="PTHR23428">
    <property type="entry name" value="HISTONE H2B"/>
    <property type="match status" value="1"/>
</dbReference>
<dbReference type="Pfam" id="PF00125">
    <property type="entry name" value="Histone"/>
    <property type="match status" value="1"/>
</dbReference>
<dbReference type="PRINTS" id="PR00621">
    <property type="entry name" value="HISTONEH2B"/>
</dbReference>
<dbReference type="SMART" id="SM00427">
    <property type="entry name" value="H2B"/>
    <property type="match status" value="1"/>
</dbReference>
<dbReference type="SUPFAM" id="SSF47113">
    <property type="entry name" value="Histone-fold"/>
    <property type="match status" value="1"/>
</dbReference>
<dbReference type="PROSITE" id="PS00357">
    <property type="entry name" value="HISTONE_H2B"/>
    <property type="match status" value="1"/>
</dbReference>
<evidence type="ECO:0000250" key="1"/>
<evidence type="ECO:0000250" key="2">
    <source>
        <dbReference type="UniProtKB" id="P02283"/>
    </source>
</evidence>
<evidence type="ECO:0000256" key="3">
    <source>
        <dbReference type="SAM" id="MobiDB-lite"/>
    </source>
</evidence>
<evidence type="ECO:0000305" key="4"/>
<sequence>MPPKTSGKAAKKAGKAQKNITKTDKKKKRRRKESYAIYIYKVLKQVHPDTGISSKAMSIMNSFVNDIFERIAAEASRLAHYNKRSTITSREIQTAVRLLLPGELAKHAVSEGTKAVTKYTSSK</sequence>
<organism>
    <name type="scientific">Drosophila yakuba</name>
    <name type="common">Fruit fly</name>
    <dbReference type="NCBI Taxonomy" id="7245"/>
    <lineage>
        <taxon>Eukaryota</taxon>
        <taxon>Metazoa</taxon>
        <taxon>Ecdysozoa</taxon>
        <taxon>Arthropoda</taxon>
        <taxon>Hexapoda</taxon>
        <taxon>Insecta</taxon>
        <taxon>Pterygota</taxon>
        <taxon>Neoptera</taxon>
        <taxon>Endopterygota</taxon>
        <taxon>Diptera</taxon>
        <taxon>Brachycera</taxon>
        <taxon>Muscomorpha</taxon>
        <taxon>Ephydroidea</taxon>
        <taxon>Drosophilidae</taxon>
        <taxon>Drosophila</taxon>
        <taxon>Sophophora</taxon>
    </lineage>
</organism>
<proteinExistence type="inferred from homology"/>
<protein>
    <recommendedName>
        <fullName>Histone H2B</fullName>
    </recommendedName>
</protein>
<gene>
    <name type="primary">His2B</name>
</gene>
<accession>Q8I1N0</accession>
<reference key="1">
    <citation type="journal article" date="2001" name="Genes Genet. Syst.">
        <title>Molecular evolutionary analysis of a histone gene repeating unit from Drosophila simulans.</title>
        <authorList>
            <person name="Tsunemoto K."/>
            <person name="Matsuo Y."/>
        </authorList>
    </citation>
    <scope>NUCLEOTIDE SEQUENCE [GENOMIC DNA]</scope>
</reference>
<name>H2B_DROYA</name>
<comment type="function">
    <text>Core component of nucleosome. Nucleosomes wrap and compact DNA into chromatin, limiting DNA accessibility to the cellular machineries which require DNA as a template. Histones thereby play a central role in transcription regulation, DNA repair, DNA replication and chromosomal stability. DNA accessibility is regulated via a complex set of post-translational modifications of histones, also called histone code, and nucleosome remodeling.</text>
</comment>
<comment type="subunit">
    <text>The nucleosome is a histone octamer containing two molecules each of H2A, H2B, H3 and H4 assembled in one H3-H4 heterotetramer and two H2A-H2B heterodimers. The octamer wraps approximately 147 bp of DNA.</text>
</comment>
<comment type="subcellular location">
    <subcellularLocation>
        <location>Nucleus</location>
    </subcellularLocation>
    <subcellularLocation>
        <location>Chromosome</location>
    </subcellularLocation>
</comment>
<comment type="PTM">
    <text evidence="2">Phosphorylated by the catalytic component of the Dbf4-dependent kinase (DDK) complex Cdc7.</text>
</comment>
<comment type="PTM">
    <text evidence="2">Monoubiquitination of Lys-118 by Bre1 gives a specific tag for epigenetic transcriptional activation and is also prerequisite for histone H3 'Lys-4' and 'Lys-79' methylation (By similarity). Deubiquitination of Lys-118 by the SAGA complex is involved in activating transcription of a large subset of genes (By similarity).</text>
</comment>
<comment type="PTM">
    <text evidence="2">Methylation at Pro-2 increases upon heat shock.</text>
</comment>
<comment type="PTM">
    <text evidence="2">GlcNAcylation at Ser-110 promotes monoubiquitination of Lys-118. It fluctuates in response to extracellular glucose, and associates with transcribed genes.</text>
</comment>
<comment type="similarity">
    <text evidence="4">Belongs to the histone H2B family.</text>
</comment>
<keyword id="KW-0158">Chromosome</keyword>
<keyword id="KW-0238">DNA-binding</keyword>
<keyword id="KW-0325">Glycoprotein</keyword>
<keyword id="KW-1017">Isopeptide bond</keyword>
<keyword id="KW-0488">Methylation</keyword>
<keyword id="KW-0544">Nucleosome core</keyword>
<keyword id="KW-0539">Nucleus</keyword>
<keyword id="KW-0832">Ubl conjugation</keyword>